<protein>
    <recommendedName>
        <fullName>Genome polyprotein</fullName>
    </recommendedName>
    <component>
        <recommendedName>
            <fullName>P1 protease</fullName>
            <ecNumber>3.4.21.-</ecNumber>
        </recommendedName>
        <alternativeName>
            <fullName>Leader protease P1</fullName>
        </alternativeName>
        <alternativeName>
            <fullName>N-terminal protein</fullName>
        </alternativeName>
        <alternativeName>
            <fullName>P1 proteinase</fullName>
        </alternativeName>
    </component>
    <component>
        <recommendedName>
            <fullName>Helper component proteinase</fullName>
            <shortName>HC-pro</shortName>
            <ecNumber evidence="2">3.4.22.45</ecNumber>
        </recommendedName>
    </component>
    <component>
        <recommendedName>
            <fullName>Protein P3</fullName>
        </recommendedName>
    </component>
    <component>
        <recommendedName>
            <fullName>6 kDa protein 1</fullName>
            <shortName>6K1</shortName>
        </recommendedName>
    </component>
    <component>
        <recommendedName>
            <fullName>Cytoplasmic inclusion protein</fullName>
            <shortName>CI</shortName>
            <ecNumber>3.6.4.-</ecNumber>
        </recommendedName>
    </component>
    <component>
        <recommendedName>
            <fullName>6 kDa protein 2</fullName>
            <shortName>6K2</shortName>
        </recommendedName>
    </component>
    <component>
        <recommendedName>
            <fullName>Viral genome-linked protein</fullName>
        </recommendedName>
        <alternativeName>
            <fullName>VPg</fullName>
        </alternativeName>
    </component>
    <component>
        <recommendedName>
            <fullName>Nuclear inclusion protein A</fullName>
            <shortName>NI-a</shortName>
            <shortName>NIa</shortName>
            <ecNumber>3.4.22.44</ecNumber>
        </recommendedName>
        <alternativeName>
            <fullName>49 kDa proteinase</fullName>
            <shortName>49 kDa-Pro</shortName>
        </alternativeName>
        <alternativeName>
            <fullName>NIa-pro</fullName>
        </alternativeName>
    </component>
    <component>
        <recommendedName>
            <fullName>Nuclear inclusion protein B</fullName>
            <shortName>NI-b</shortName>
            <shortName>NIb</shortName>
            <ecNumber>2.7.7.48</ecNumber>
        </recommendedName>
        <alternativeName>
            <fullName>RNA-directed RNA polymerase</fullName>
        </alternativeName>
    </component>
    <component>
        <recommendedName>
            <fullName>Capsid protein</fullName>
            <shortName>CP</shortName>
        </recommendedName>
        <alternativeName>
            <fullName>Coat protein</fullName>
        </alternativeName>
    </component>
</protein>
<accession>P17766</accession>
<feature type="chain" id="PRO_0000420007" description="Genome polyprotein">
    <location>
        <begin position="1"/>
        <end position="3125"/>
    </location>
</feature>
<feature type="chain" id="PRO_0000040331" description="P1 protease" evidence="9">
    <location>
        <begin position="1"/>
        <end position="308"/>
    </location>
</feature>
<feature type="chain" id="PRO_0000040332" description="Helper component proteinase" evidence="9">
    <location>
        <begin position="309"/>
        <end position="766"/>
    </location>
</feature>
<feature type="chain" id="PRO_0000040333" description="Protein P3" evidence="1">
    <location>
        <begin position="767"/>
        <end position="1116"/>
    </location>
</feature>
<feature type="chain" id="PRO_0000040334" description="6 kDa protein 1" evidence="1">
    <location>
        <begin position="1117"/>
        <end position="1168"/>
    </location>
</feature>
<feature type="chain" id="PRO_0000040335" description="Cytoplasmic inclusion protein" evidence="1">
    <location>
        <begin position="1169"/>
        <end position="1803"/>
    </location>
</feature>
<feature type="chain" id="PRO_0000040336" description="6 kDa protein 2" evidence="1">
    <location>
        <begin position="1804"/>
        <end position="1856"/>
    </location>
</feature>
<feature type="chain" id="PRO_0000040337" description="Viral genome-linked protein" evidence="1">
    <location>
        <begin position="1857"/>
        <end position="2049"/>
    </location>
</feature>
<feature type="chain" id="PRO_0000040338" description="Nuclear inclusion protein A" evidence="1">
    <location>
        <begin position="2050"/>
        <end position="2292"/>
    </location>
</feature>
<feature type="chain" id="PRO_0000040339" description="Nuclear inclusion protein B" evidence="1">
    <location>
        <begin position="2293"/>
        <end position="2810"/>
    </location>
</feature>
<feature type="chain" id="PRO_0000040340" description="Capsid protein" evidence="1">
    <location>
        <begin position="2811"/>
        <end position="3125"/>
    </location>
</feature>
<feature type="domain" description="Peptidase S30" evidence="15">
    <location>
        <begin position="165"/>
        <end position="308"/>
    </location>
</feature>
<feature type="domain" description="Peptidase C6" evidence="14">
    <location>
        <begin position="644"/>
        <end position="766"/>
    </location>
</feature>
<feature type="domain" description="Helicase ATP-binding" evidence="11">
    <location>
        <begin position="1240"/>
        <end position="1392"/>
    </location>
</feature>
<feature type="domain" description="Helicase C-terminal" evidence="12">
    <location>
        <begin position="1411"/>
        <end position="1570"/>
    </location>
</feature>
<feature type="domain" description="Peptidase C4" evidence="13">
    <location>
        <begin position="2050"/>
        <end position="2268"/>
    </location>
</feature>
<feature type="domain" description="RdRp catalytic" evidence="10">
    <location>
        <begin position="2534"/>
        <end position="2658"/>
    </location>
</feature>
<feature type="region of interest" description="Disordered" evidence="16">
    <location>
        <begin position="2869"/>
        <end position="2897"/>
    </location>
</feature>
<feature type="short sequence motif" description="Involved in interaction with stylet and aphid transmission" evidence="1">
    <location>
        <begin position="360"/>
        <end position="363"/>
    </location>
</feature>
<feature type="short sequence motif" description="Involved in virions binding and aphid transmission" evidence="1">
    <location>
        <begin position="618"/>
        <end position="620"/>
    </location>
</feature>
<feature type="short sequence motif" description="DECH box">
    <location>
        <begin position="1342"/>
        <end position="1345"/>
    </location>
</feature>
<feature type="short sequence motif" description="Nuclear localization signal" evidence="9">
    <location>
        <begin position="1897"/>
        <end position="1904"/>
    </location>
</feature>
<feature type="compositionally biased region" description="Polar residues" evidence="16">
    <location>
        <begin position="2876"/>
        <end position="2886"/>
    </location>
</feature>
<feature type="active site" description="For P1 proteinase activity" evidence="15">
    <location>
        <position position="216"/>
    </location>
</feature>
<feature type="active site" description="For P1 proteinase activity" evidence="15">
    <location>
        <position position="225"/>
    </location>
</feature>
<feature type="active site" description="For P1 proteinase activity" evidence="15">
    <location>
        <position position="259"/>
    </location>
</feature>
<feature type="active site" description="For helper component proteinase activity" evidence="14">
    <location>
        <position position="652"/>
    </location>
</feature>
<feature type="active site" description="For helper component proteinase activity" evidence="14">
    <location>
        <position position="725"/>
    </location>
</feature>
<feature type="active site" description="For nuclear inclusion protein A activity" evidence="13">
    <location>
        <position position="2095"/>
    </location>
</feature>
<feature type="active site" description="For nuclear inclusion protein A activity" evidence="13">
    <location>
        <position position="2130"/>
    </location>
</feature>
<feature type="active site" description="For nuclear inclusion protein A activity" evidence="13">
    <location>
        <position position="2200"/>
    </location>
</feature>
<feature type="binding site" evidence="11">
    <location>
        <begin position="1253"/>
        <end position="1260"/>
    </location>
    <ligand>
        <name>ATP</name>
        <dbReference type="ChEBI" id="CHEBI:30616"/>
    </ligand>
</feature>
<feature type="site" description="Cleavage; by P1 proteinase" evidence="15">
    <location>
        <begin position="308"/>
        <end position="309"/>
    </location>
</feature>
<feature type="site" description="Cleavage; by autolysis" evidence="14">
    <location>
        <begin position="766"/>
        <end position="767"/>
    </location>
</feature>
<feature type="site" description="Cleavage; by NIa-pro" evidence="6">
    <location>
        <begin position="1116"/>
        <end position="1117"/>
    </location>
</feature>
<feature type="site" description="Cleavage; by NIa-pro" evidence="6">
    <location>
        <begin position="1168"/>
        <end position="1169"/>
    </location>
</feature>
<feature type="site" description="Cleavage; by NIa-pro" evidence="6">
    <location>
        <begin position="1803"/>
        <end position="1804"/>
    </location>
</feature>
<feature type="site" description="Cleavage; by NIa-pro" evidence="6">
    <location>
        <begin position="1856"/>
        <end position="1857"/>
    </location>
</feature>
<feature type="site" description="Cleavage; by NIa-pro" evidence="6">
    <location>
        <begin position="2049"/>
        <end position="2050"/>
    </location>
</feature>
<feature type="site" description="Cleavage; by NIa-pro" evidence="6">
    <location>
        <begin position="2292"/>
        <end position="2293"/>
    </location>
</feature>
<feature type="site" description="Cleavage; by NIa-pro" evidence="6">
    <location>
        <begin position="2810"/>
        <end position="2811"/>
    </location>
</feature>
<feature type="modified residue" description="O-(5'-phospho-RNA)-tyrosine" evidence="3">
    <location>
        <position position="1919"/>
    </location>
</feature>
<feature type="modified residue" description="Phosphoserine" evidence="5">
    <location>
        <position position="2876"/>
    </location>
</feature>
<feature type="modified residue" description="Phosphoserine" evidence="5">
    <location>
        <position position="2896"/>
    </location>
</feature>
<feature type="modified residue" description="Phosphoserine" evidence="5">
    <location>
        <position position="2913"/>
    </location>
</feature>
<feature type="modified residue" description="Phosphothreonine" evidence="5">
    <location>
        <position position="3049"/>
    </location>
</feature>
<feature type="modified residue" description="Phosphothreonine" evidence="5">
    <location>
        <position position="3108"/>
    </location>
</feature>
<dbReference type="EC" id="3.4.21.-"/>
<dbReference type="EC" id="3.4.22.45" evidence="2"/>
<dbReference type="EC" id="3.6.4.-"/>
<dbReference type="EC" id="3.4.22.44"/>
<dbReference type="EC" id="2.7.7.48"/>
<dbReference type="EMBL" id="D13751">
    <property type="protein sequence ID" value="BAA02898.1"/>
    <property type="molecule type" value="Genomic_RNA"/>
</dbReference>
<dbReference type="PIR" id="JQ0003">
    <property type="entry name" value="GNVSPP"/>
</dbReference>
<dbReference type="RefSeq" id="NP_040807.1">
    <property type="nucleotide sequence ID" value="NC_001445.1"/>
</dbReference>
<dbReference type="MEROPS" id="C04.001"/>
<dbReference type="GeneID" id="1494049"/>
<dbReference type="KEGG" id="vg:1494049"/>
<dbReference type="Proteomes" id="UP000006685">
    <property type="component" value="Segment"/>
</dbReference>
<dbReference type="GO" id="GO:0019029">
    <property type="term" value="C:helical viral capsid"/>
    <property type="evidence" value="ECO:0007669"/>
    <property type="project" value="UniProtKB-KW"/>
</dbReference>
<dbReference type="GO" id="GO:0044161">
    <property type="term" value="C:host cell cytoplasmic vesicle"/>
    <property type="evidence" value="ECO:0007669"/>
    <property type="project" value="UniProtKB-SubCell"/>
</dbReference>
<dbReference type="GO" id="GO:0042025">
    <property type="term" value="C:host cell nucleus"/>
    <property type="evidence" value="ECO:0007669"/>
    <property type="project" value="UniProtKB-SubCell"/>
</dbReference>
<dbReference type="GO" id="GO:0005524">
    <property type="term" value="F:ATP binding"/>
    <property type="evidence" value="ECO:0007669"/>
    <property type="project" value="UniProtKB-KW"/>
</dbReference>
<dbReference type="GO" id="GO:0004197">
    <property type="term" value="F:cysteine-type endopeptidase activity"/>
    <property type="evidence" value="ECO:0007669"/>
    <property type="project" value="InterPro"/>
</dbReference>
<dbReference type="GO" id="GO:0004386">
    <property type="term" value="F:helicase activity"/>
    <property type="evidence" value="ECO:0007669"/>
    <property type="project" value="UniProtKB-KW"/>
</dbReference>
<dbReference type="GO" id="GO:0016818">
    <property type="term" value="F:hydrolase activity, acting on acid anhydrides, in phosphorus-containing anhydrides"/>
    <property type="evidence" value="ECO:0007669"/>
    <property type="project" value="InterPro"/>
</dbReference>
<dbReference type="GO" id="GO:0003723">
    <property type="term" value="F:RNA binding"/>
    <property type="evidence" value="ECO:0007669"/>
    <property type="project" value="InterPro"/>
</dbReference>
<dbReference type="GO" id="GO:0003968">
    <property type="term" value="F:RNA-directed RNA polymerase activity"/>
    <property type="evidence" value="ECO:0007669"/>
    <property type="project" value="UniProtKB-KW"/>
</dbReference>
<dbReference type="GO" id="GO:0008236">
    <property type="term" value="F:serine-type peptidase activity"/>
    <property type="evidence" value="ECO:0007669"/>
    <property type="project" value="UniProtKB-KW"/>
</dbReference>
<dbReference type="GO" id="GO:0005198">
    <property type="term" value="F:structural molecule activity"/>
    <property type="evidence" value="ECO:0007669"/>
    <property type="project" value="InterPro"/>
</dbReference>
<dbReference type="GO" id="GO:0006351">
    <property type="term" value="P:DNA-templated transcription"/>
    <property type="evidence" value="ECO:0007669"/>
    <property type="project" value="InterPro"/>
</dbReference>
<dbReference type="GO" id="GO:0006508">
    <property type="term" value="P:proteolysis"/>
    <property type="evidence" value="ECO:0007669"/>
    <property type="project" value="UniProtKB-KW"/>
</dbReference>
<dbReference type="GO" id="GO:0052170">
    <property type="term" value="P:symbiont-mediated suppression of host innate immune response"/>
    <property type="evidence" value="ECO:0007669"/>
    <property type="project" value="UniProtKB-KW"/>
</dbReference>
<dbReference type="GO" id="GO:0039694">
    <property type="term" value="P:viral RNA genome replication"/>
    <property type="evidence" value="ECO:0007669"/>
    <property type="project" value="InterPro"/>
</dbReference>
<dbReference type="GO" id="GO:0075523">
    <property type="term" value="P:viral translational frameshifting"/>
    <property type="evidence" value="ECO:0007669"/>
    <property type="project" value="UniProtKB-KW"/>
</dbReference>
<dbReference type="CDD" id="cd23175">
    <property type="entry name" value="ps-ssRNAv_Potyviridae_RdRp"/>
    <property type="match status" value="1"/>
</dbReference>
<dbReference type="Gene3D" id="3.30.70.270">
    <property type="match status" value="1"/>
</dbReference>
<dbReference type="Gene3D" id="3.90.70.150">
    <property type="entry name" value="Helper component proteinase"/>
    <property type="match status" value="1"/>
</dbReference>
<dbReference type="Gene3D" id="3.40.50.300">
    <property type="entry name" value="P-loop containing nucleotide triphosphate hydrolases"/>
    <property type="match status" value="2"/>
</dbReference>
<dbReference type="Gene3D" id="2.40.10.10">
    <property type="entry name" value="Trypsin-like serine proteases"/>
    <property type="match status" value="2"/>
</dbReference>
<dbReference type="InterPro" id="IPR011545">
    <property type="entry name" value="DEAD/DEAH_box_helicase_dom"/>
</dbReference>
<dbReference type="InterPro" id="IPR043502">
    <property type="entry name" value="DNA/RNA_pol_sf"/>
</dbReference>
<dbReference type="InterPro" id="IPR001456">
    <property type="entry name" value="HC-pro"/>
</dbReference>
<dbReference type="InterPro" id="IPR031159">
    <property type="entry name" value="HC_PRO_CPD_dom"/>
</dbReference>
<dbReference type="InterPro" id="IPR042308">
    <property type="entry name" value="HC_PRO_CPD_sf"/>
</dbReference>
<dbReference type="InterPro" id="IPR014001">
    <property type="entry name" value="Helicase_ATP-bd"/>
</dbReference>
<dbReference type="InterPro" id="IPR001650">
    <property type="entry name" value="Helicase_C-like"/>
</dbReference>
<dbReference type="InterPro" id="IPR027417">
    <property type="entry name" value="P-loop_NTPase"/>
</dbReference>
<dbReference type="InterPro" id="IPR002540">
    <property type="entry name" value="Pept_S30_P1_potyvir"/>
</dbReference>
<dbReference type="InterPro" id="IPR009003">
    <property type="entry name" value="Peptidase_S1_PA"/>
</dbReference>
<dbReference type="InterPro" id="IPR043504">
    <property type="entry name" value="Peptidase_S1_PA_chymotrypsin"/>
</dbReference>
<dbReference type="InterPro" id="IPR001592">
    <property type="entry name" value="Poty_coat"/>
</dbReference>
<dbReference type="InterPro" id="IPR001730">
    <property type="entry name" value="Potyv_NIa-pro_dom"/>
</dbReference>
<dbReference type="InterPro" id="IPR039560">
    <property type="entry name" value="Potyvirid-P3"/>
</dbReference>
<dbReference type="InterPro" id="IPR013648">
    <property type="entry name" value="PP_Potyviridae"/>
</dbReference>
<dbReference type="InterPro" id="IPR043128">
    <property type="entry name" value="Rev_trsase/Diguanyl_cyclase"/>
</dbReference>
<dbReference type="InterPro" id="IPR001205">
    <property type="entry name" value="RNA-dir_pol_C"/>
</dbReference>
<dbReference type="InterPro" id="IPR007094">
    <property type="entry name" value="RNA-dir_pol_PSvirus"/>
</dbReference>
<dbReference type="PANTHER" id="PTHR43519">
    <property type="entry name" value="ATP-DEPENDENT RNA HELICASE HRPB"/>
    <property type="match status" value="1"/>
</dbReference>
<dbReference type="PANTHER" id="PTHR43519:SF1">
    <property type="entry name" value="ATP-DEPENDENT RNA HELICASE HRPB"/>
    <property type="match status" value="1"/>
</dbReference>
<dbReference type="Pfam" id="PF00270">
    <property type="entry name" value="DEAD"/>
    <property type="match status" value="1"/>
</dbReference>
<dbReference type="Pfam" id="PF00271">
    <property type="entry name" value="Helicase_C"/>
    <property type="match status" value="1"/>
</dbReference>
<dbReference type="Pfam" id="PF00863">
    <property type="entry name" value="Peptidase_C4"/>
    <property type="match status" value="1"/>
</dbReference>
<dbReference type="Pfam" id="PF00851">
    <property type="entry name" value="Peptidase_C6"/>
    <property type="match status" value="1"/>
</dbReference>
<dbReference type="Pfam" id="PF01577">
    <property type="entry name" value="Peptidase_S30"/>
    <property type="match status" value="1"/>
</dbReference>
<dbReference type="Pfam" id="PF00767">
    <property type="entry name" value="Poty_coat"/>
    <property type="match status" value="1"/>
</dbReference>
<dbReference type="Pfam" id="PF08440">
    <property type="entry name" value="Poty_PP"/>
    <property type="match status" value="1"/>
</dbReference>
<dbReference type="Pfam" id="PF13608">
    <property type="entry name" value="Potyvirid-P3"/>
    <property type="match status" value="1"/>
</dbReference>
<dbReference type="Pfam" id="PF00680">
    <property type="entry name" value="RdRP_1"/>
    <property type="match status" value="1"/>
</dbReference>
<dbReference type="PRINTS" id="PR00966">
    <property type="entry name" value="NIAPOTYPTASE"/>
</dbReference>
<dbReference type="SMART" id="SM00487">
    <property type="entry name" value="DEXDc"/>
    <property type="match status" value="1"/>
</dbReference>
<dbReference type="SMART" id="SM00490">
    <property type="entry name" value="HELICc"/>
    <property type="match status" value="1"/>
</dbReference>
<dbReference type="SUPFAM" id="SSF56672">
    <property type="entry name" value="DNA/RNA polymerases"/>
    <property type="match status" value="1"/>
</dbReference>
<dbReference type="SUPFAM" id="SSF52540">
    <property type="entry name" value="P-loop containing nucleoside triphosphate hydrolases"/>
    <property type="match status" value="2"/>
</dbReference>
<dbReference type="SUPFAM" id="SSF50494">
    <property type="entry name" value="Trypsin-like serine proteases"/>
    <property type="match status" value="1"/>
</dbReference>
<dbReference type="PROSITE" id="PS51744">
    <property type="entry name" value="HC_PRO_CPD"/>
    <property type="match status" value="1"/>
</dbReference>
<dbReference type="PROSITE" id="PS51192">
    <property type="entry name" value="HELICASE_ATP_BIND_1"/>
    <property type="match status" value="1"/>
</dbReference>
<dbReference type="PROSITE" id="PS51194">
    <property type="entry name" value="HELICASE_CTER"/>
    <property type="match status" value="1"/>
</dbReference>
<dbReference type="PROSITE" id="PS51436">
    <property type="entry name" value="POTYVIRUS_NIA_PRO"/>
    <property type="match status" value="1"/>
</dbReference>
<dbReference type="PROSITE" id="PS51871">
    <property type="entry name" value="PV_P1_PRO"/>
    <property type="match status" value="1"/>
</dbReference>
<dbReference type="PROSITE" id="PS50507">
    <property type="entry name" value="RDRP_SSRNA_POS"/>
    <property type="match status" value="1"/>
</dbReference>
<sequence>MSTIVFGSFTCHLDAAIHQDNADRLAKAWTRPENRQVSNAHLLCRRAAESLINTYESATASAWKGLEEKLQPMFAKREFSKTVTKRKGLRCFKESSEKFIEKKLRKQYQEERERLQFLNGPDAIVNQISVDKCEASVRVPSPHIIEKPSFVTPSMKKKVVFKKVRMSEASLQLFMRRVAANAKANGQKVEIIGRKRVVGNYTTKSRLTYFRTHVRHLDGSKPRYDLVLDEATKKILQLFANTSGFHHVHKKGEVTPGMSGFVVNPMNLSDPMQVYDTDLFIVRGKHNSILVDSRCKVSKKQSNEIIHYSDPGKQFSDGFTNSFMQCKLRETDHQCTSDLDVKECGYVAALVCQAIIPCGKITCLQCAQKYSYMSQQEIRDRFSTVIEQHEKTVMDNYPQFSHVLAFLKRYRELMRVENQNYEAFKDITHMIGERKEAPFSHLNKINELIIKGGMMSAQDYIEASDHLRELARYQKNRTENIRSGSIKAFRNKISSKAHVNMQLMCDNQLDTNGNFVWGQREYHAKRFFRNYFDVIDVSEGYRRHIVRENPRGIRKLAIGNLVMSTNLAALRKQLLGEECIHFEVSKECTSKRGENFVYQCCCVTHEDGTPLESEIISPTKNHLVVGNSGDSKYVDLPTAKGGAMFIAKAGYCYINIFLAMLININEDEAKSFTKTVRDTLVPKLGTWPSMMDLATACHFLAVLYPETRNAELPRILVDHEAKIFHVVDSFGSLSTGMHVLKANTINQLISFASDTLDSNMKTYLVGGLEVDKCDEFKNVKLLIRSIYKPQIMEQVLKEEPYLLLMSVLSPGVLMALFNSGSLEKATQYWITRSHSLAAITSMLSALAAKVSLASTLNAQMSVIDEHAAVLYDSVFVGTQPYASYMMAVKTLERMKARTESDHTLNDLGFSVLRQATPHLVEKSYLQELEQAWKELSWSEKFSAILESQRWRKHIPKPFIPKDGADLGGRYDISVRSLLGNQYKRLRDVVRWKRDDVVCYTYQSMGKLFCKAIGISPSFLPSTLKMLDMLIVFSLLLSIGATCNSMVNEHKHLKQLAADREDKKRFKRLQVLYTRLSEKVGCTPTADEFLEYVGDENPDLLKHAEDLIGDGQVVVHQSKRDSQANLERVVAFVALVMMLFDSERSDGVYKILNKLKGIMGSVDRAVHHQSLDDIEDILDEKKLTVDFVLQSNEVAPTVPFDSTFEKWWMNQLETGNVIPHYRTEGHFLEFTRENAAHIANEVMHGSHQDILIRGAVGSGKSTGLPFHLSKKGHVLLIEPTRPLAENVCKQLRGQPFNVNPTLRMRGMSTFGSTPITVMTSGYALHFLANNPTYLDNYKCIIFDECHVHDASAMAFRCLLSEYSYPGKILKVSATPPGHEVEFKTQKEVKVIVEESLSFQQFVSNLGTGCNSDILKHGVNVLVYVASYNEVDTLSKLLTDRSFKVSKVDGRTMKVGNVEIPTSGTQAKPHFVVATNIIENGVTLDIDVVVDFGLKVVPVLDIDNRLVRYTKKSISYGERIQRLGRVGRNKPGAALRIGFTEKGLTQIPPIIATEAAFLCFTYGLPVMTNGVSTSLLAMCTVKQARTMQQFELSPFYTVALVRFDGTMHQEIFRLLKSYRLRDSEVILNKLAIPNSNVCGWMSVRDYKRQGCNLDLDENIRVPFYVKDIPETLHERIWQAVETHKSDAGFGRICSSSACKIAYTLQTDIHSIPRTIKIIDALLEQERTKQAHFRAMTSQSCSSSNFSLSSITSAIRSKYAKDHTEENIGVLQMAKSQLLEFKNLNIDPSYPELIRNFGALECVHHQTKEGVSKALQLKGHWNKRLITRDATLMLGVLGGGAWMIFSYLRDSFKEEVIHQGFNRRQRQKLKFRQARDNRMAREVYGDDSTMEAYFGSAYSKKGKSKGKTRGMGTKTRKFVNMYGYDPTDYNFVRFVDPLTGHTLDESPLMDINLVQEHFSQIRNDYIGDDKITMQHIMSNPGIVAYYIKDATQKALKVDLTPHNPLRVCDKTATIAGFPEREFELRQTGHPVFVEPNAIPKINEEGDEEVDHESKSLFRGLRDYNPIASSICQLNNSSGARQSEMFGLGFGGLIVTNQHLFKRNDGELTIRSHHGEFVVKDTKTLKLLPCKGRDIVIIRLPKDFPPFPRRLQFRTPTTEDRVCLIGSNFQTKSISSTMSETSATYPVDNSHFWKHWISTKDGHCGLPIVSTRDGSILGLHSLANSTNTQNFYAAFPDNFETTYLSNQDNDNWIKQWRYNPDEVCWGSLQLKRDIPQSPFTICKLLTDLDGEFVYTQSKTTHWLRDRLEGNLKAVGACPGQLVTKHVVKGKCTLFETYLLTHPEEHEFFRPLMGAYQKSALNKDAYVKDLMKYSKPIVVGAVDCDQFERAVDVVISMLISKGFEECNYVTDPDDIFSALNMKAAVGALYSGKKRDYFENVSDQDKESFVRASCKRLFMGKKGVWNGSLKAELRPKEKVEANKTRSFTAAPIDTLLGGKVCVDDFNNQFYSLNLHCPWSVGMTKFRGGWDKLLKALPEGWIYCDADGSQFDSSLSPYLINAVLNIRLAFMEEWDIGEQMLSNLYTEIVYTPIATPDGTIVKKFKGNNSGQPSTVVDNTLMVILAMTYSLLKLGHHPDTHDCICRYFVNGDDLVLAVHPAYESIYDELQEHFSQLGLNYTFTTKTENKEELWFMSHKGVLYDDMYIPKLEPERIVSILEWDRSNEPIHRLEAICASMVEAWGYKELLREIRKFYSWVLEQAPYNALSKDGKAPYIAETALKKLYTDTEASETEIERYLEAFYDNINDDGESNVVVHQADEREDEEEVDALQPPPVIQPAPRTTAPMLNPIFTPATTQPATKPVSQVSGPQLQTFGTYSHEDASPSNSNALVNTNRDRDVDAGSTGTFTVPRLKAMTSKLSLPKVKGKAIMNLNHLAHYSPAQVDLSNTRAPQSCFQTWYEGVKRDYDVTDDEMSIILNGLMVWCIENGTSPNINGMWVMMDGETQVEYPIKPLLDHAKPTFRQIMAHFSNVAEAYIEKRNYEKAYMPRYGIQRNLTDYSLARYAFDFYEMTSTTPVRAREAHIQMKAAALRNVQNRLFGLDGNVGTQEEDTERHTAGDVNRNMHNLLGMRGV</sequence>
<organism>
    <name type="scientific">Plum pox potyvirus (isolate NAT)</name>
    <name type="common">PPV</name>
    <dbReference type="NCBI Taxonomy" id="12213"/>
    <lineage>
        <taxon>Viruses</taxon>
        <taxon>Riboviria</taxon>
        <taxon>Orthornavirae</taxon>
        <taxon>Pisuviricota</taxon>
        <taxon>Stelpaviricetes</taxon>
        <taxon>Patatavirales</taxon>
        <taxon>Potyviridae</taxon>
        <taxon>Potyvirus</taxon>
        <taxon>Potyvirus plumpoxi</taxon>
        <taxon>Plum pox virus</taxon>
    </lineage>
</organism>
<evidence type="ECO:0000250" key="1"/>
<evidence type="ECO:0000250" key="2">
    <source>
        <dbReference type="UniProtKB" id="P04517"/>
    </source>
</evidence>
<evidence type="ECO:0000250" key="3">
    <source>
        <dbReference type="UniProtKB" id="P09814"/>
    </source>
</evidence>
<evidence type="ECO:0000250" key="4">
    <source>
        <dbReference type="UniProtKB" id="P13529"/>
    </source>
</evidence>
<evidence type="ECO:0000250" key="5">
    <source>
        <dbReference type="UniProtKB" id="P17767"/>
    </source>
</evidence>
<evidence type="ECO:0000250" key="6">
    <source>
        <dbReference type="UniProtKB" id="P18247"/>
    </source>
</evidence>
<evidence type="ECO:0000250" key="7">
    <source>
        <dbReference type="UniProtKB" id="P21231"/>
    </source>
</evidence>
<evidence type="ECO:0000250" key="8">
    <source>
        <dbReference type="UniProtKB" id="P89509"/>
    </source>
</evidence>
<evidence type="ECO:0000255" key="9"/>
<evidence type="ECO:0000255" key="10">
    <source>
        <dbReference type="PROSITE-ProRule" id="PRU00539"/>
    </source>
</evidence>
<evidence type="ECO:0000255" key="11">
    <source>
        <dbReference type="PROSITE-ProRule" id="PRU00541"/>
    </source>
</evidence>
<evidence type="ECO:0000255" key="12">
    <source>
        <dbReference type="PROSITE-ProRule" id="PRU00542"/>
    </source>
</evidence>
<evidence type="ECO:0000255" key="13">
    <source>
        <dbReference type="PROSITE-ProRule" id="PRU00766"/>
    </source>
</evidence>
<evidence type="ECO:0000255" key="14">
    <source>
        <dbReference type="PROSITE-ProRule" id="PRU01080"/>
    </source>
</evidence>
<evidence type="ECO:0000255" key="15">
    <source>
        <dbReference type="PROSITE-ProRule" id="PRU01219"/>
    </source>
</evidence>
<evidence type="ECO:0000256" key="16">
    <source>
        <dbReference type="SAM" id="MobiDB-lite"/>
    </source>
</evidence>
<evidence type="ECO:0000305" key="17"/>
<organismHost>
    <name type="scientific">Prunus armeniaca</name>
    <name type="common">Apricot</name>
    <name type="synonym">Armeniaca vulgaris</name>
    <dbReference type="NCBI Taxonomy" id="36596"/>
</organismHost>
<organismHost>
    <name type="scientific">Prunus cerasifera</name>
    <name type="common">cherry plum</name>
    <dbReference type="NCBI Taxonomy" id="36595"/>
</organismHost>
<organismHost>
    <name type="scientific">Prunus domestica</name>
    <name type="common">Garden plum</name>
    <dbReference type="NCBI Taxonomy" id="3758"/>
</organismHost>
<organismHost>
    <name type="scientific">Prunus glandulosa</name>
    <dbReference type="NCBI Taxonomy" id="105665"/>
</organismHost>
<organismHost>
    <name type="scientific">Prunus persica</name>
    <name type="common">Peach</name>
    <name type="synonym">Amygdalus persica</name>
    <dbReference type="NCBI Taxonomy" id="3760"/>
</organismHost>
<organismHost>
    <name type="scientific">Prunus salicina</name>
    <dbReference type="NCBI Taxonomy" id="88123"/>
</organismHost>
<organismHost>
    <name type="scientific">Prunus spinosa</name>
    <name type="common">Blackthorn</name>
    <name type="synonym">Prunus domestica var. spinosa</name>
    <dbReference type="NCBI Taxonomy" id="114937"/>
</organismHost>
<name>POLG_PPVNA</name>
<comment type="function">
    <molecule>Helper component proteinase</molecule>
    <text evidence="2">Required for aphid transmission and also has proteolytic activity. Only cleaves a Gly-Gly dipeptide at its own C-terminus. Interacts with virions and aphid stylets. Acts as a suppressor of RNA-mediated gene silencing, also known as post-transcriptional gene silencing (PTGS), a mechanism of plant viral defense that limits the accumulation of viral RNAs. May have RNA-binding activity.</text>
</comment>
<comment type="function">
    <molecule>Cytoplasmic inclusion protein</molecule>
    <text>Has helicase activity. It may be involved in replication.</text>
</comment>
<comment type="function">
    <molecule>6 kDa protein 1</molecule>
    <text evidence="4 8">Indispensable for virus replication (By similarity). Reduces the abundance of host transcripts related to jasmonic acid biosynthesis therefore altering the host defenses (By similarity). In order to increase its own stability, decreases host protein degradation pathways (By similarity).</text>
</comment>
<comment type="function">
    <molecule>6 kDa protein 2</molecule>
    <text evidence="3">Indispensable for virus replication.</text>
</comment>
<comment type="function">
    <molecule>Viral genome-linked protein</molecule>
    <text evidence="6">Mediates the cap-independent, EIF4E-dependent translation of viral genomic RNAs (By similarity). Binds to the cap-binding site of host EIF4E and thus interferes with the host EIF4E-dependent mRNA export and translation (By similarity). VPg-RNA directly binds EIF4E and is a template for transcription (By similarity). Also forms trimeric complexes with EIF4E-EIF4G, which are templates for translation (By similarity).</text>
</comment>
<comment type="function">
    <molecule>Nuclear inclusion protein A</molecule>
    <text evidence="2">Has RNA-binding and proteolytic activities.</text>
</comment>
<comment type="function">
    <molecule>Nuclear inclusion protein B</molecule>
    <text>An RNA-dependent RNA polymerase that plays an essential role in the virus replication.</text>
</comment>
<comment type="function">
    <molecule>Capsid protein</molecule>
    <text evidence="2">Involved in aphid transmission, cell-to-cell and systemis movement, encapsidation of the viral RNA and in the regulation of viral RNA amplification.</text>
</comment>
<comment type="catalytic activity">
    <molecule>Nuclear inclusion protein B</molecule>
    <reaction evidence="10">
        <text>RNA(n) + a ribonucleoside 5'-triphosphate = RNA(n+1) + diphosphate</text>
        <dbReference type="Rhea" id="RHEA:21248"/>
        <dbReference type="Rhea" id="RHEA-COMP:14527"/>
        <dbReference type="Rhea" id="RHEA-COMP:17342"/>
        <dbReference type="ChEBI" id="CHEBI:33019"/>
        <dbReference type="ChEBI" id="CHEBI:61557"/>
        <dbReference type="ChEBI" id="CHEBI:140395"/>
        <dbReference type="EC" id="2.7.7.48"/>
    </reaction>
</comment>
<comment type="catalytic activity">
    <molecule>Nuclear inclusion protein A</molecule>
    <reaction evidence="2">
        <text>Hydrolyzes glutaminyl bonds, and activity is further restricted by preferences for the amino acids in P6 - P1' that vary with the species of potyvirus, e.g. Glu-Xaa-Xaa-Tyr-Xaa-Gln-|-(Ser or Gly) for the enzyme from tobacco etch virus. The natural substrate is the viral polyprotein, but other proteins and oligopeptides containing the appropriate consensus sequence are also cleaved.</text>
        <dbReference type="EC" id="3.4.22.44"/>
    </reaction>
</comment>
<comment type="catalytic activity">
    <molecule>Helper component proteinase</molecule>
    <reaction evidence="2">
        <text>Hydrolyzes a Gly-|-Gly bond at its own C-terminus, commonly in the sequence -Tyr-Xaa-Val-Gly-|-Gly, in the processing of the potyviral polyprotein.</text>
        <dbReference type="EC" id="3.4.22.45"/>
    </reaction>
</comment>
<comment type="subunit">
    <molecule>Viral genome-linked protein</molecule>
    <text evidence="6">Interacts with host eIF4E protein (via cap-binding region); this interaction mediates the translation of the VPg-viral RNA conjugates (By similarity). Part of a complex that comprises VPg, RNA, host EIF4E and EIF4G; this interaction mediates the translation of the VPg-viral RNA conjugates (By similarity).</text>
</comment>
<comment type="subcellular location">
    <molecule>6 kDa protein 1</molecule>
    <subcellularLocation>
        <location>Host cytoplasmic vesicle</location>
    </subcellularLocation>
    <text evidence="4">Probably colocalizes with 6K2-induced vesicles associated with host chloroplasts.</text>
</comment>
<comment type="subcellular location">
    <molecule>6 kDa protein 2</molecule>
    <subcellularLocation>
        <location evidence="3">Host cytoplasmic vesicle</location>
    </subcellularLocation>
    <text evidence="3">6K-induced vesicles associate with host chloroplasts.</text>
</comment>
<comment type="subcellular location">
    <molecule>Viral genome-linked protein</molecule>
    <subcellularLocation>
        <location evidence="7">Host nucleus</location>
    </subcellularLocation>
    <text evidence="7">Binds to host plant eIF4E proteins in the host nucleus.</text>
</comment>
<comment type="subcellular location">
    <molecule>Capsid protein</molecule>
    <subcellularLocation>
        <location evidence="17">Virion</location>
    </subcellularLocation>
</comment>
<comment type="alternative products">
    <event type="ribosomal frameshifting"/>
    <isoform>
        <id>P17766-1</id>
        <name>Genome polyprotein</name>
        <sequence type="displayed"/>
    </isoform>
    <isoform>
        <id>P0CK02-1</id>
        <name>P3N-PIPO polyprotein</name>
        <sequence type="external"/>
    </isoform>
</comment>
<comment type="domain">
    <molecule>Helper component proteinase</molecule>
    <text>The N-terminus is involved in interaction with stylets. The central part is involved in interaction with virions and the C-terminus is involved in cell-to cell movement of the virus.</text>
</comment>
<comment type="PTM">
    <molecule>Viral genome-linked protein</molecule>
    <text evidence="3">VPg is uridylylated by the polymerase and is covalently attached to the 5'-end of the genomic RNA. This uridylylated form acts as a nucleotide-peptide primer for the polymerase (By similarity).</text>
</comment>
<comment type="PTM">
    <molecule>Genome polyprotein</molecule>
    <text evidence="1">Potyviral RNA is expressed as two polyproteins which undergo post-translational proteolytic processing. Genome polyprotein is processed by NIa-pro, P1 and HC-pro proteinases resulting in the production of at least ten individual proteins. P3N-PIPO polyprotein is cleaved by P1 and HC-pro proteinases resulting in the production of three individual proteins. The P1 proteinase and the HC-pro cleave only their respective C-termini autocatalytically. 6K1 is essential for proper proteolytic separation of P3 from CI (By similarity).</text>
</comment>
<comment type="miscellaneous">
    <molecule>Isoform Genome polyprotein</molecule>
    <text>Produced by conventional translation.</text>
</comment>
<comment type="similarity">
    <text evidence="17">Belongs to the potyviridae genome polyprotein family.</text>
</comment>
<keyword id="KW-0067">ATP-binding</keyword>
<keyword id="KW-0167">Capsid protein</keyword>
<keyword id="KW-0191">Covalent protein-RNA linkage</keyword>
<keyword id="KW-1139">Helical capsid protein</keyword>
<keyword id="KW-0347">Helicase</keyword>
<keyword id="KW-1036">Host cytoplasmic vesicle</keyword>
<keyword id="KW-1048">Host nucleus</keyword>
<keyword id="KW-0945">Host-virus interaction</keyword>
<keyword id="KW-0378">Hydrolase</keyword>
<keyword id="KW-1090">Inhibition of host innate immune response by virus</keyword>
<keyword id="KW-0547">Nucleotide-binding</keyword>
<keyword id="KW-0548">Nucleotidyltransferase</keyword>
<keyword id="KW-0597">Phosphoprotein</keyword>
<keyword id="KW-0645">Protease</keyword>
<keyword id="KW-0688">Ribosomal frameshifting</keyword>
<keyword id="KW-0696">RNA-directed RNA polymerase</keyword>
<keyword id="KW-0720">Serine protease</keyword>
<keyword id="KW-0941">Suppressor of RNA silencing</keyword>
<keyword id="KW-0788">Thiol protease</keyword>
<keyword id="KW-0808">Transferase</keyword>
<keyword id="KW-0899">Viral immunoevasion</keyword>
<keyword id="KW-0693">Viral RNA replication</keyword>
<keyword id="KW-0946">Virion</keyword>
<reference key="1">
    <citation type="journal article" date="1989" name="J. Gen. Virol.">
        <title>The complete nucleotide sequence of plum pox virus RNA.</title>
        <authorList>
            <person name="Maiss E."/>
            <person name="Timpe U."/>
            <person name="Brisske A."/>
            <person name="Jelkmann W."/>
            <person name="Casper R."/>
            <person name="Himmler G."/>
            <person name="Mattanovich D."/>
            <person name="Katinger H.W.D."/>
        </authorList>
    </citation>
    <scope>NUCLEOTIDE SEQUENCE [GENOMIC RNA]</scope>
</reference>
<reference key="2">
    <citation type="journal article" date="2001" name="Virus Res.">
        <title>Potyvirus proteins: a wealth of functions.</title>
        <authorList>
            <person name="Urcuqui-Inchima S."/>
            <person name="Haenni A.L."/>
            <person name="Bernardi F."/>
        </authorList>
    </citation>
    <scope>REVIEW</scope>
</reference>
<proteinExistence type="inferred from homology"/>